<comment type="catalytic activity">
    <reaction evidence="1">
        <text>L-citrulline + L-aspartate + ATP = 2-(N(omega)-L-arginino)succinate + AMP + diphosphate + H(+)</text>
        <dbReference type="Rhea" id="RHEA:10932"/>
        <dbReference type="ChEBI" id="CHEBI:15378"/>
        <dbReference type="ChEBI" id="CHEBI:29991"/>
        <dbReference type="ChEBI" id="CHEBI:30616"/>
        <dbReference type="ChEBI" id="CHEBI:33019"/>
        <dbReference type="ChEBI" id="CHEBI:57472"/>
        <dbReference type="ChEBI" id="CHEBI:57743"/>
        <dbReference type="ChEBI" id="CHEBI:456215"/>
        <dbReference type="EC" id="6.3.4.5"/>
    </reaction>
</comment>
<comment type="pathway">
    <text evidence="1">Amino-acid biosynthesis; L-arginine biosynthesis; L-arginine from L-ornithine and carbamoyl phosphate: step 2/3.</text>
</comment>
<comment type="subunit">
    <text evidence="1">Homotetramer.</text>
</comment>
<comment type="subcellular location">
    <subcellularLocation>
        <location evidence="1">Cytoplasm</location>
    </subcellularLocation>
</comment>
<comment type="similarity">
    <text evidence="1">Belongs to the argininosuccinate synthase family. Type 2 subfamily.</text>
</comment>
<feature type="chain" id="PRO_1000025428" description="Argininosuccinate synthase">
    <location>
        <begin position="1"/>
        <end position="444"/>
    </location>
</feature>
<feature type="binding site" evidence="1">
    <location>
        <begin position="18"/>
        <end position="26"/>
    </location>
    <ligand>
        <name>ATP</name>
        <dbReference type="ChEBI" id="CHEBI:30616"/>
    </ligand>
</feature>
<feature type="binding site" evidence="1">
    <location>
        <position position="44"/>
    </location>
    <ligand>
        <name>ATP</name>
        <dbReference type="ChEBI" id="CHEBI:30616"/>
    </ligand>
</feature>
<feature type="binding site" evidence="1">
    <location>
        <position position="100"/>
    </location>
    <ligand>
        <name>L-citrulline</name>
        <dbReference type="ChEBI" id="CHEBI:57743"/>
    </ligand>
</feature>
<feature type="binding site" evidence="1">
    <location>
        <position position="130"/>
    </location>
    <ligand>
        <name>ATP</name>
        <dbReference type="ChEBI" id="CHEBI:30616"/>
    </ligand>
</feature>
<feature type="binding site" evidence="1">
    <location>
        <position position="132"/>
    </location>
    <ligand>
        <name>ATP</name>
        <dbReference type="ChEBI" id="CHEBI:30616"/>
    </ligand>
</feature>
<feature type="binding site" evidence="1">
    <location>
        <position position="132"/>
    </location>
    <ligand>
        <name>L-aspartate</name>
        <dbReference type="ChEBI" id="CHEBI:29991"/>
    </ligand>
</feature>
<feature type="binding site" evidence="1">
    <location>
        <position position="136"/>
    </location>
    <ligand>
        <name>L-aspartate</name>
        <dbReference type="ChEBI" id="CHEBI:29991"/>
    </ligand>
</feature>
<feature type="binding site" evidence="1">
    <location>
        <position position="136"/>
    </location>
    <ligand>
        <name>L-citrulline</name>
        <dbReference type="ChEBI" id="CHEBI:57743"/>
    </ligand>
</feature>
<feature type="binding site" evidence="1">
    <location>
        <position position="137"/>
    </location>
    <ligand>
        <name>ATP</name>
        <dbReference type="ChEBI" id="CHEBI:30616"/>
    </ligand>
</feature>
<feature type="binding site" evidence="1">
    <location>
        <position position="137"/>
    </location>
    <ligand>
        <name>L-aspartate</name>
        <dbReference type="ChEBI" id="CHEBI:29991"/>
    </ligand>
</feature>
<feature type="binding site" evidence="1">
    <location>
        <position position="140"/>
    </location>
    <ligand>
        <name>L-citrulline</name>
        <dbReference type="ChEBI" id="CHEBI:57743"/>
    </ligand>
</feature>
<feature type="binding site" evidence="1">
    <location>
        <position position="193"/>
    </location>
    <ligand>
        <name>L-citrulline</name>
        <dbReference type="ChEBI" id="CHEBI:57743"/>
    </ligand>
</feature>
<feature type="binding site" evidence="1">
    <location>
        <position position="195"/>
    </location>
    <ligand>
        <name>ATP</name>
        <dbReference type="ChEBI" id="CHEBI:30616"/>
    </ligand>
</feature>
<feature type="binding site" evidence="1">
    <location>
        <position position="202"/>
    </location>
    <ligand>
        <name>L-citrulline</name>
        <dbReference type="ChEBI" id="CHEBI:57743"/>
    </ligand>
</feature>
<feature type="binding site" evidence="1">
    <location>
        <position position="204"/>
    </location>
    <ligand>
        <name>L-citrulline</name>
        <dbReference type="ChEBI" id="CHEBI:57743"/>
    </ligand>
</feature>
<feature type="binding site" evidence="1">
    <location>
        <position position="281"/>
    </location>
    <ligand>
        <name>L-citrulline</name>
        <dbReference type="ChEBI" id="CHEBI:57743"/>
    </ligand>
</feature>
<organism>
    <name type="scientific">Histophilus somni (strain 129Pt)</name>
    <name type="common">Haemophilus somnus</name>
    <dbReference type="NCBI Taxonomy" id="205914"/>
    <lineage>
        <taxon>Bacteria</taxon>
        <taxon>Pseudomonadati</taxon>
        <taxon>Pseudomonadota</taxon>
        <taxon>Gammaproteobacteria</taxon>
        <taxon>Pasteurellales</taxon>
        <taxon>Pasteurellaceae</taxon>
        <taxon>Histophilus</taxon>
    </lineage>
</organism>
<accession>Q0I4M1</accession>
<protein>
    <recommendedName>
        <fullName evidence="1">Argininosuccinate synthase</fullName>
        <ecNumber evidence="1">6.3.4.5</ecNumber>
    </recommendedName>
    <alternativeName>
        <fullName evidence="1">Citrulline--aspartate ligase</fullName>
    </alternativeName>
</protein>
<reference key="1">
    <citation type="journal article" date="2007" name="J. Bacteriol.">
        <title>Complete genome sequence of Haemophilus somnus (Histophilus somni) strain 129Pt and comparison to Haemophilus ducreyi 35000HP and Haemophilus influenzae Rd.</title>
        <authorList>
            <person name="Challacombe J.F."/>
            <person name="Duncan A.J."/>
            <person name="Brettin T.S."/>
            <person name="Bruce D."/>
            <person name="Chertkov O."/>
            <person name="Detter J.C."/>
            <person name="Han C.S."/>
            <person name="Misra M."/>
            <person name="Richardson P."/>
            <person name="Tapia R."/>
            <person name="Thayer N."/>
            <person name="Xie G."/>
            <person name="Inzana T.J."/>
        </authorList>
    </citation>
    <scope>NUCLEOTIDE SEQUENCE [LARGE SCALE GENOMIC DNA]</scope>
    <source>
        <strain>129Pt</strain>
    </source>
</reference>
<sequence>MSNTILQHLPIGQKVGIAFSGGLDTSAALLWMRQKGAVPYAYTANLGQPDEEDYNAIPRKAMEYGAEKARLIDCRNQLAHEGIAAIQCGAFHISTGGVTYFNTTPLGRAVTGTMLVSAMKEDDVNIWGDGSTFKGNDIERFYRYGLLTNPSLRIYKPWLDNQFIDELGGRQEMSEFLIANGFDYKMSVEKAYSTDSNMLGATHEAKDLEYLNSGIRIVKPIMGVAFWRDDVTVKAEEVTVGFEDGVPVTLNGQSFSSAVELFLEANRIGGRHGLGMSDQIENRIIEAKSRGIYEAPGMALLHIAYERLVTAIHNEDTIEQYRINGLRLGRLLYQGRWFDPQALMLRETAQRWVARAVTGEVTLELRRGNDYSILNTVSPNMTYHPERLSMEKVENAPFDPSDRIGQLTMRNLDITDTRDKLGIYTHTGLLTVGKDSMLPQLDKK</sequence>
<keyword id="KW-0028">Amino-acid biosynthesis</keyword>
<keyword id="KW-0055">Arginine biosynthesis</keyword>
<keyword id="KW-0067">ATP-binding</keyword>
<keyword id="KW-0963">Cytoplasm</keyword>
<keyword id="KW-0436">Ligase</keyword>
<keyword id="KW-0547">Nucleotide-binding</keyword>
<gene>
    <name evidence="1" type="primary">argG</name>
    <name type="ordered locus">HS_1362</name>
</gene>
<name>ASSY_HISS1</name>
<proteinExistence type="inferred from homology"/>
<evidence type="ECO:0000255" key="1">
    <source>
        <dbReference type="HAMAP-Rule" id="MF_00581"/>
    </source>
</evidence>
<dbReference type="EC" id="6.3.4.5" evidence="1"/>
<dbReference type="EMBL" id="CP000436">
    <property type="protein sequence ID" value="ABI25637.1"/>
    <property type="molecule type" value="Genomic_DNA"/>
</dbReference>
<dbReference type="SMR" id="Q0I4M1"/>
<dbReference type="KEGG" id="hso:HS_1362"/>
<dbReference type="eggNOG" id="COG0137">
    <property type="taxonomic scope" value="Bacteria"/>
</dbReference>
<dbReference type="HOGENOM" id="CLU_032784_4_1_6"/>
<dbReference type="UniPathway" id="UPA00068">
    <property type="reaction ID" value="UER00113"/>
</dbReference>
<dbReference type="GO" id="GO:0005737">
    <property type="term" value="C:cytoplasm"/>
    <property type="evidence" value="ECO:0007669"/>
    <property type="project" value="UniProtKB-SubCell"/>
</dbReference>
<dbReference type="GO" id="GO:0004055">
    <property type="term" value="F:argininosuccinate synthase activity"/>
    <property type="evidence" value="ECO:0007669"/>
    <property type="project" value="UniProtKB-UniRule"/>
</dbReference>
<dbReference type="GO" id="GO:0005524">
    <property type="term" value="F:ATP binding"/>
    <property type="evidence" value="ECO:0007669"/>
    <property type="project" value="UniProtKB-UniRule"/>
</dbReference>
<dbReference type="GO" id="GO:0042803">
    <property type="term" value="F:protein homodimerization activity"/>
    <property type="evidence" value="ECO:0007669"/>
    <property type="project" value="InterPro"/>
</dbReference>
<dbReference type="GO" id="GO:0000053">
    <property type="term" value="P:argininosuccinate metabolic process"/>
    <property type="evidence" value="ECO:0007669"/>
    <property type="project" value="TreeGrafter"/>
</dbReference>
<dbReference type="GO" id="GO:0006526">
    <property type="term" value="P:L-arginine biosynthetic process"/>
    <property type="evidence" value="ECO:0007669"/>
    <property type="project" value="UniProtKB-UniRule"/>
</dbReference>
<dbReference type="GO" id="GO:0000050">
    <property type="term" value="P:urea cycle"/>
    <property type="evidence" value="ECO:0007669"/>
    <property type="project" value="TreeGrafter"/>
</dbReference>
<dbReference type="CDD" id="cd01999">
    <property type="entry name" value="ASS"/>
    <property type="match status" value="1"/>
</dbReference>
<dbReference type="FunFam" id="1.10.287.400:FF:000001">
    <property type="entry name" value="Argininosuccinate synthase"/>
    <property type="match status" value="1"/>
</dbReference>
<dbReference type="Gene3D" id="1.10.287.400">
    <property type="match status" value="1"/>
</dbReference>
<dbReference type="Gene3D" id="3.90.1260.10">
    <property type="entry name" value="Argininosuccinate synthetase, chain A, domain 2"/>
    <property type="match status" value="1"/>
</dbReference>
<dbReference type="Gene3D" id="3.40.50.620">
    <property type="entry name" value="HUPs"/>
    <property type="match status" value="1"/>
</dbReference>
<dbReference type="HAMAP" id="MF_00581">
    <property type="entry name" value="Arg_succ_synth_type2"/>
    <property type="match status" value="1"/>
</dbReference>
<dbReference type="InterPro" id="IPR023437">
    <property type="entry name" value="Arg_succ_synth_type2_subfam"/>
</dbReference>
<dbReference type="InterPro" id="IPR048268">
    <property type="entry name" value="Arginosuc_syn_C"/>
</dbReference>
<dbReference type="InterPro" id="IPR048267">
    <property type="entry name" value="Arginosuc_syn_N"/>
</dbReference>
<dbReference type="InterPro" id="IPR001518">
    <property type="entry name" value="Arginosuc_synth"/>
</dbReference>
<dbReference type="InterPro" id="IPR018223">
    <property type="entry name" value="Arginosuc_synth_CS"/>
</dbReference>
<dbReference type="InterPro" id="IPR023434">
    <property type="entry name" value="Arginosuc_synth_type_1_subfam"/>
</dbReference>
<dbReference type="InterPro" id="IPR024074">
    <property type="entry name" value="AS_cat/multimer_dom_body"/>
</dbReference>
<dbReference type="InterPro" id="IPR024073">
    <property type="entry name" value="AS_multimer_C_tail"/>
</dbReference>
<dbReference type="InterPro" id="IPR014729">
    <property type="entry name" value="Rossmann-like_a/b/a_fold"/>
</dbReference>
<dbReference type="NCBIfam" id="TIGR00032">
    <property type="entry name" value="argG"/>
    <property type="match status" value="1"/>
</dbReference>
<dbReference type="NCBIfam" id="NF003779">
    <property type="entry name" value="PRK05370.1"/>
    <property type="match status" value="1"/>
</dbReference>
<dbReference type="PANTHER" id="PTHR11587">
    <property type="entry name" value="ARGININOSUCCINATE SYNTHASE"/>
    <property type="match status" value="1"/>
</dbReference>
<dbReference type="PANTHER" id="PTHR11587:SF2">
    <property type="entry name" value="ARGININOSUCCINATE SYNTHASE"/>
    <property type="match status" value="1"/>
</dbReference>
<dbReference type="Pfam" id="PF20979">
    <property type="entry name" value="Arginosuc_syn_C"/>
    <property type="match status" value="1"/>
</dbReference>
<dbReference type="Pfam" id="PF00764">
    <property type="entry name" value="Arginosuc_synth"/>
    <property type="match status" value="1"/>
</dbReference>
<dbReference type="SUPFAM" id="SSF52402">
    <property type="entry name" value="Adenine nucleotide alpha hydrolases-like"/>
    <property type="match status" value="1"/>
</dbReference>
<dbReference type="SUPFAM" id="SSF69864">
    <property type="entry name" value="Argininosuccinate synthetase, C-terminal domain"/>
    <property type="match status" value="1"/>
</dbReference>
<dbReference type="PROSITE" id="PS00564">
    <property type="entry name" value="ARGININOSUCCIN_SYN_1"/>
    <property type="match status" value="1"/>
</dbReference>
<dbReference type="PROSITE" id="PS00565">
    <property type="entry name" value="ARGININOSUCCIN_SYN_2"/>
    <property type="match status" value="1"/>
</dbReference>